<keyword id="KW-0456">Lyase</keyword>
<keyword id="KW-0501">Molybdenum cofactor biosynthesis</keyword>
<protein>
    <recommendedName>
        <fullName evidence="1">Cyclic pyranopterin monophosphate synthase</fullName>
        <ecNumber evidence="1">4.6.1.17</ecNumber>
    </recommendedName>
    <alternativeName>
        <fullName evidence="1">Molybdenum cofactor biosynthesis protein C</fullName>
    </alternativeName>
</protein>
<feature type="chain" id="PRO_1000139279" description="Cyclic pyranopterin monophosphate synthase">
    <location>
        <begin position="1"/>
        <end position="160"/>
    </location>
</feature>
<feature type="active site" evidence="1">
    <location>
        <position position="130"/>
    </location>
</feature>
<feature type="binding site" evidence="1">
    <location>
        <begin position="75"/>
        <end position="77"/>
    </location>
    <ligand>
        <name>substrate</name>
    </ligand>
</feature>
<feature type="binding site" evidence="1">
    <location>
        <begin position="115"/>
        <end position="116"/>
    </location>
    <ligand>
        <name>substrate</name>
    </ligand>
</feature>
<evidence type="ECO:0000255" key="1">
    <source>
        <dbReference type="HAMAP-Rule" id="MF_01224"/>
    </source>
</evidence>
<accession>B1HQT3</accession>
<reference key="1">
    <citation type="journal article" date="2008" name="J. Bacteriol.">
        <title>Complete genome sequence of the mosquitocidal bacterium Bacillus sphaericus C3-41 and comparison with those of closely related Bacillus species.</title>
        <authorList>
            <person name="Hu X."/>
            <person name="Fan W."/>
            <person name="Han B."/>
            <person name="Liu H."/>
            <person name="Zheng D."/>
            <person name="Li Q."/>
            <person name="Dong W."/>
            <person name="Yan J."/>
            <person name="Gao M."/>
            <person name="Berry C."/>
            <person name="Yuan Z."/>
        </authorList>
    </citation>
    <scope>NUCLEOTIDE SEQUENCE [LARGE SCALE GENOMIC DNA]</scope>
    <source>
        <strain>C3-41</strain>
    </source>
</reference>
<organism>
    <name type="scientific">Lysinibacillus sphaericus (strain C3-41)</name>
    <dbReference type="NCBI Taxonomy" id="444177"/>
    <lineage>
        <taxon>Bacteria</taxon>
        <taxon>Bacillati</taxon>
        <taxon>Bacillota</taxon>
        <taxon>Bacilli</taxon>
        <taxon>Bacillales</taxon>
        <taxon>Bacillaceae</taxon>
        <taxon>Lysinibacillus</taxon>
    </lineage>
</organism>
<sequence>MNNFSHWNEAGRPKMVDISEKEITTRTAIARSTITLSNEVYQAIQQGGIKKGDPTQVAQIAGIMGAKKTADIIPMCHPIMLQGTDLQFDYEKIDNGYALHIQATVKCNGKTGVEMEALTAVSIAALTFYDMCKAVDKTMVIKETYLVEKTGGKSGTFTHK</sequence>
<comment type="function">
    <text evidence="1">Catalyzes the conversion of (8S)-3',8-cyclo-7,8-dihydroguanosine 5'-triphosphate to cyclic pyranopterin monophosphate (cPMP).</text>
</comment>
<comment type="catalytic activity">
    <reaction evidence="1">
        <text>(8S)-3',8-cyclo-7,8-dihydroguanosine 5'-triphosphate = cyclic pyranopterin phosphate + diphosphate</text>
        <dbReference type="Rhea" id="RHEA:49580"/>
        <dbReference type="ChEBI" id="CHEBI:33019"/>
        <dbReference type="ChEBI" id="CHEBI:59648"/>
        <dbReference type="ChEBI" id="CHEBI:131766"/>
        <dbReference type="EC" id="4.6.1.17"/>
    </reaction>
</comment>
<comment type="pathway">
    <text evidence="1">Cofactor biosynthesis; molybdopterin biosynthesis.</text>
</comment>
<comment type="subunit">
    <text evidence="1">Homohexamer; trimer of dimers.</text>
</comment>
<comment type="similarity">
    <text evidence="1">Belongs to the MoaC family.</text>
</comment>
<proteinExistence type="inferred from homology"/>
<gene>
    <name evidence="1" type="primary">moaC</name>
    <name type="ordered locus">Bsph_3320</name>
</gene>
<name>MOAC_LYSSC</name>
<dbReference type="EC" id="4.6.1.17" evidence="1"/>
<dbReference type="EMBL" id="CP000817">
    <property type="protein sequence ID" value="ACA40820.1"/>
    <property type="molecule type" value="Genomic_DNA"/>
</dbReference>
<dbReference type="RefSeq" id="WP_012294884.1">
    <property type="nucleotide sequence ID" value="NC_010382.1"/>
</dbReference>
<dbReference type="SMR" id="B1HQT3"/>
<dbReference type="EnsemblBacteria" id="ACA40820">
    <property type="protein sequence ID" value="ACA40820"/>
    <property type="gene ID" value="Bsph_3320"/>
</dbReference>
<dbReference type="KEGG" id="lsp:Bsph_3320"/>
<dbReference type="HOGENOM" id="CLU_074693_1_1_9"/>
<dbReference type="UniPathway" id="UPA00344"/>
<dbReference type="Proteomes" id="UP000002164">
    <property type="component" value="Chromosome"/>
</dbReference>
<dbReference type="GO" id="GO:0061799">
    <property type="term" value="F:cyclic pyranopterin monophosphate synthase activity"/>
    <property type="evidence" value="ECO:0007669"/>
    <property type="project" value="UniProtKB-UniRule"/>
</dbReference>
<dbReference type="GO" id="GO:0006777">
    <property type="term" value="P:Mo-molybdopterin cofactor biosynthetic process"/>
    <property type="evidence" value="ECO:0007669"/>
    <property type="project" value="UniProtKB-UniRule"/>
</dbReference>
<dbReference type="CDD" id="cd01420">
    <property type="entry name" value="MoaC_PE"/>
    <property type="match status" value="1"/>
</dbReference>
<dbReference type="Gene3D" id="3.30.70.640">
    <property type="entry name" value="Molybdopterin cofactor biosynthesis C (MoaC) domain"/>
    <property type="match status" value="1"/>
</dbReference>
<dbReference type="HAMAP" id="MF_01224_B">
    <property type="entry name" value="MoaC_B"/>
    <property type="match status" value="1"/>
</dbReference>
<dbReference type="InterPro" id="IPR023045">
    <property type="entry name" value="MoaC"/>
</dbReference>
<dbReference type="InterPro" id="IPR047594">
    <property type="entry name" value="MoaC_bact/euk"/>
</dbReference>
<dbReference type="InterPro" id="IPR036522">
    <property type="entry name" value="MoaC_sf"/>
</dbReference>
<dbReference type="InterPro" id="IPR050105">
    <property type="entry name" value="MoCo_biosynth_MoaA/MoaC"/>
</dbReference>
<dbReference type="InterPro" id="IPR002820">
    <property type="entry name" value="Mopterin_CF_biosynth-C_dom"/>
</dbReference>
<dbReference type="NCBIfam" id="TIGR00581">
    <property type="entry name" value="moaC"/>
    <property type="match status" value="1"/>
</dbReference>
<dbReference type="NCBIfam" id="NF006870">
    <property type="entry name" value="PRK09364.1"/>
    <property type="match status" value="1"/>
</dbReference>
<dbReference type="PANTHER" id="PTHR22960">
    <property type="entry name" value="MOLYBDOPTERIN COFACTOR SYNTHESIS PROTEIN A"/>
    <property type="match status" value="1"/>
</dbReference>
<dbReference type="Pfam" id="PF01967">
    <property type="entry name" value="MoaC"/>
    <property type="match status" value="1"/>
</dbReference>
<dbReference type="SUPFAM" id="SSF55040">
    <property type="entry name" value="Molybdenum cofactor biosynthesis protein C, MoaC"/>
    <property type="match status" value="1"/>
</dbReference>